<evidence type="ECO:0000255" key="1">
    <source>
        <dbReference type="HAMAP-Rule" id="MF_00739"/>
    </source>
</evidence>
<sequence>MRLTPHEQERLLLSYAAELARRRRARGLRLNHPEAIAVIADHILEGARDGRTVAELMASGREVLGRDDVMEGVPEMLAEVQVEATFPDGTKLVTVHQPIA</sequence>
<reference key="1">
    <citation type="journal article" date="2009" name="Vaccine">
        <title>Whole genome sequence analysis of Mycobacterium bovis bacillus Calmette-Guerin (BCG) Tokyo 172: a comparative study of BCG vaccine substrains.</title>
        <authorList>
            <person name="Seki M."/>
            <person name="Honda I."/>
            <person name="Fujita I."/>
            <person name="Yano I."/>
            <person name="Yamamoto S."/>
            <person name="Koyama A."/>
        </authorList>
    </citation>
    <scope>NUCLEOTIDE SEQUENCE [LARGE SCALE GENOMIC DNA]</scope>
    <source>
        <strain>BCG / Tokyo 172 / ATCC 35737 / TMC 1019</strain>
    </source>
</reference>
<accession>C1APC5</accession>
<name>URE3_MYCBT</name>
<protein>
    <recommendedName>
        <fullName evidence="1">Urease subunit gamma</fullName>
        <ecNumber evidence="1">3.5.1.5</ecNumber>
    </recommendedName>
    <alternativeName>
        <fullName evidence="1">Urea amidohydrolase subunit gamma</fullName>
    </alternativeName>
</protein>
<comment type="catalytic activity">
    <reaction evidence="1">
        <text>urea + 2 H2O + H(+) = hydrogencarbonate + 2 NH4(+)</text>
        <dbReference type="Rhea" id="RHEA:20557"/>
        <dbReference type="ChEBI" id="CHEBI:15377"/>
        <dbReference type="ChEBI" id="CHEBI:15378"/>
        <dbReference type="ChEBI" id="CHEBI:16199"/>
        <dbReference type="ChEBI" id="CHEBI:17544"/>
        <dbReference type="ChEBI" id="CHEBI:28938"/>
        <dbReference type="EC" id="3.5.1.5"/>
    </reaction>
</comment>
<comment type="pathway">
    <text evidence="1">Nitrogen metabolism; urea degradation; CO(2) and NH(3) from urea (urease route): step 1/1.</text>
</comment>
<comment type="subunit">
    <text evidence="1">Heterotrimer of UreA (gamma), UreB (beta) and UreC (alpha) subunits. Three heterotrimers associate to form the active enzyme.</text>
</comment>
<comment type="subcellular location">
    <subcellularLocation>
        <location evidence="1">Cytoplasm</location>
    </subcellularLocation>
</comment>
<comment type="similarity">
    <text evidence="1">Belongs to the urease gamma subunit family.</text>
</comment>
<feature type="chain" id="PRO_1000199872" description="Urease subunit gamma">
    <location>
        <begin position="1"/>
        <end position="100"/>
    </location>
</feature>
<gene>
    <name evidence="1" type="primary">ureA</name>
    <name type="ordered locus">JTY_1868</name>
</gene>
<dbReference type="EC" id="3.5.1.5" evidence="1"/>
<dbReference type="EMBL" id="AP010918">
    <property type="protein sequence ID" value="BAH26154.1"/>
    <property type="molecule type" value="Genomic_DNA"/>
</dbReference>
<dbReference type="RefSeq" id="WP_003409305.1">
    <property type="nucleotide sequence ID" value="NZ_CP014566.1"/>
</dbReference>
<dbReference type="SMR" id="C1APC5"/>
<dbReference type="KEGG" id="mbt:JTY_1868"/>
<dbReference type="HOGENOM" id="CLU_145825_1_0_11"/>
<dbReference type="UniPathway" id="UPA00258">
    <property type="reaction ID" value="UER00370"/>
</dbReference>
<dbReference type="GO" id="GO:0005737">
    <property type="term" value="C:cytoplasm"/>
    <property type="evidence" value="ECO:0007669"/>
    <property type="project" value="UniProtKB-SubCell"/>
</dbReference>
<dbReference type="GO" id="GO:0016151">
    <property type="term" value="F:nickel cation binding"/>
    <property type="evidence" value="ECO:0007669"/>
    <property type="project" value="InterPro"/>
</dbReference>
<dbReference type="GO" id="GO:0009039">
    <property type="term" value="F:urease activity"/>
    <property type="evidence" value="ECO:0007669"/>
    <property type="project" value="UniProtKB-UniRule"/>
</dbReference>
<dbReference type="GO" id="GO:0043419">
    <property type="term" value="P:urea catabolic process"/>
    <property type="evidence" value="ECO:0007669"/>
    <property type="project" value="UniProtKB-UniRule"/>
</dbReference>
<dbReference type="CDD" id="cd00390">
    <property type="entry name" value="Urease_gamma"/>
    <property type="match status" value="1"/>
</dbReference>
<dbReference type="FunFam" id="3.30.280.10:FF:000002">
    <property type="entry name" value="Urease subunit gamma"/>
    <property type="match status" value="1"/>
</dbReference>
<dbReference type="Gene3D" id="3.30.280.10">
    <property type="entry name" value="Urease, gamma-like subunit"/>
    <property type="match status" value="1"/>
</dbReference>
<dbReference type="HAMAP" id="MF_00739">
    <property type="entry name" value="Urease_gamma"/>
    <property type="match status" value="1"/>
</dbReference>
<dbReference type="InterPro" id="IPR012010">
    <property type="entry name" value="Urease_gamma"/>
</dbReference>
<dbReference type="InterPro" id="IPR002026">
    <property type="entry name" value="Urease_gamma/gamma-beta_su"/>
</dbReference>
<dbReference type="InterPro" id="IPR036463">
    <property type="entry name" value="Urease_gamma_sf"/>
</dbReference>
<dbReference type="InterPro" id="IPR050069">
    <property type="entry name" value="Urease_subunit"/>
</dbReference>
<dbReference type="NCBIfam" id="NF009712">
    <property type="entry name" value="PRK13241.1"/>
    <property type="match status" value="1"/>
</dbReference>
<dbReference type="NCBIfam" id="TIGR00193">
    <property type="entry name" value="urease_gam"/>
    <property type="match status" value="1"/>
</dbReference>
<dbReference type="PANTHER" id="PTHR33569">
    <property type="entry name" value="UREASE"/>
    <property type="match status" value="1"/>
</dbReference>
<dbReference type="PANTHER" id="PTHR33569:SF1">
    <property type="entry name" value="UREASE"/>
    <property type="match status" value="1"/>
</dbReference>
<dbReference type="Pfam" id="PF00547">
    <property type="entry name" value="Urease_gamma"/>
    <property type="match status" value="1"/>
</dbReference>
<dbReference type="PIRSF" id="PIRSF001223">
    <property type="entry name" value="Urease_gamma"/>
    <property type="match status" value="1"/>
</dbReference>
<dbReference type="SUPFAM" id="SSF54111">
    <property type="entry name" value="Urease, gamma-subunit"/>
    <property type="match status" value="1"/>
</dbReference>
<proteinExistence type="inferred from homology"/>
<keyword id="KW-0963">Cytoplasm</keyword>
<keyword id="KW-0378">Hydrolase</keyword>
<organism>
    <name type="scientific">Mycobacterium bovis (strain BCG / Tokyo 172 / ATCC 35737 / TMC 1019)</name>
    <dbReference type="NCBI Taxonomy" id="561275"/>
    <lineage>
        <taxon>Bacteria</taxon>
        <taxon>Bacillati</taxon>
        <taxon>Actinomycetota</taxon>
        <taxon>Actinomycetes</taxon>
        <taxon>Mycobacteriales</taxon>
        <taxon>Mycobacteriaceae</taxon>
        <taxon>Mycobacterium</taxon>
        <taxon>Mycobacterium tuberculosis complex</taxon>
    </lineage>
</organism>